<protein>
    <recommendedName>
        <fullName>Arsenical resistance operon repressor</fullName>
    </recommendedName>
</protein>
<name>ARSR_BACSU</name>
<evidence type="ECO:0000255" key="1">
    <source>
        <dbReference type="PROSITE-ProRule" id="PRU00340"/>
    </source>
</evidence>
<accession>P45949</accession>
<feature type="chain" id="PRO_0000160610" description="Arsenical resistance operon repressor">
    <location>
        <begin position="1"/>
        <end position="105"/>
    </location>
</feature>
<feature type="domain" description="HTH arsR-type" evidence="1">
    <location>
        <begin position="4"/>
        <end position="99"/>
    </location>
</feature>
<feature type="DNA-binding region" description="H-T-H motif" evidence="1">
    <location>
        <begin position="39"/>
        <end position="62"/>
    </location>
</feature>
<gene>
    <name type="primary">arsR</name>
    <name type="synonym">yqcJ</name>
    <name type="ordered locus">BSU25810</name>
</gene>
<reference key="1">
    <citation type="journal article" date="1995" name="Microbiology">
        <title>Complete nucleotide sequence of a skin element excised by DNA rearrangement during sporulation in Bacillus subtilis.</title>
        <authorList>
            <person name="Takemaru K."/>
            <person name="Mizuno M."/>
            <person name="Sato T."/>
            <person name="Takeuchi M."/>
            <person name="Kobayashi Y."/>
        </authorList>
    </citation>
    <scope>NUCLEOTIDE SEQUENCE [GENOMIC DNA]</scope>
    <source>
        <strain>168 / JH642</strain>
    </source>
</reference>
<reference key="2">
    <citation type="journal article" date="1996" name="Microbiology">
        <title>Systematic sequencing of the 283 kb 210 degrees-232 degrees region of the Bacillus subtilis genome containing the skin element and many sporulation genes.</title>
        <authorList>
            <person name="Mizuno M."/>
            <person name="Masuda S."/>
            <person name="Takemaru K."/>
            <person name="Hosono S."/>
            <person name="Sato T."/>
            <person name="Takeuchi M."/>
            <person name="Kobayashi Y."/>
        </authorList>
    </citation>
    <scope>NUCLEOTIDE SEQUENCE [GENOMIC DNA]</scope>
    <source>
        <strain>168 / JH642</strain>
    </source>
</reference>
<reference key="3">
    <citation type="journal article" date="1997" name="Nature">
        <title>The complete genome sequence of the Gram-positive bacterium Bacillus subtilis.</title>
        <authorList>
            <person name="Kunst F."/>
            <person name="Ogasawara N."/>
            <person name="Moszer I."/>
            <person name="Albertini A.M."/>
            <person name="Alloni G."/>
            <person name="Azevedo V."/>
            <person name="Bertero M.G."/>
            <person name="Bessieres P."/>
            <person name="Bolotin A."/>
            <person name="Borchert S."/>
            <person name="Borriss R."/>
            <person name="Boursier L."/>
            <person name="Brans A."/>
            <person name="Braun M."/>
            <person name="Brignell S.C."/>
            <person name="Bron S."/>
            <person name="Brouillet S."/>
            <person name="Bruschi C.V."/>
            <person name="Caldwell B."/>
            <person name="Capuano V."/>
            <person name="Carter N.M."/>
            <person name="Choi S.-K."/>
            <person name="Codani J.-J."/>
            <person name="Connerton I.F."/>
            <person name="Cummings N.J."/>
            <person name="Daniel R.A."/>
            <person name="Denizot F."/>
            <person name="Devine K.M."/>
            <person name="Duesterhoeft A."/>
            <person name="Ehrlich S.D."/>
            <person name="Emmerson P.T."/>
            <person name="Entian K.-D."/>
            <person name="Errington J."/>
            <person name="Fabret C."/>
            <person name="Ferrari E."/>
            <person name="Foulger D."/>
            <person name="Fritz C."/>
            <person name="Fujita M."/>
            <person name="Fujita Y."/>
            <person name="Fuma S."/>
            <person name="Galizzi A."/>
            <person name="Galleron N."/>
            <person name="Ghim S.-Y."/>
            <person name="Glaser P."/>
            <person name="Goffeau A."/>
            <person name="Golightly E.J."/>
            <person name="Grandi G."/>
            <person name="Guiseppi G."/>
            <person name="Guy B.J."/>
            <person name="Haga K."/>
            <person name="Haiech J."/>
            <person name="Harwood C.R."/>
            <person name="Henaut A."/>
            <person name="Hilbert H."/>
            <person name="Holsappel S."/>
            <person name="Hosono S."/>
            <person name="Hullo M.-F."/>
            <person name="Itaya M."/>
            <person name="Jones L.-M."/>
            <person name="Joris B."/>
            <person name="Karamata D."/>
            <person name="Kasahara Y."/>
            <person name="Klaerr-Blanchard M."/>
            <person name="Klein C."/>
            <person name="Kobayashi Y."/>
            <person name="Koetter P."/>
            <person name="Koningstein G."/>
            <person name="Krogh S."/>
            <person name="Kumano M."/>
            <person name="Kurita K."/>
            <person name="Lapidus A."/>
            <person name="Lardinois S."/>
            <person name="Lauber J."/>
            <person name="Lazarevic V."/>
            <person name="Lee S.-M."/>
            <person name="Levine A."/>
            <person name="Liu H."/>
            <person name="Masuda S."/>
            <person name="Mauel C."/>
            <person name="Medigue C."/>
            <person name="Medina N."/>
            <person name="Mellado R.P."/>
            <person name="Mizuno M."/>
            <person name="Moestl D."/>
            <person name="Nakai S."/>
            <person name="Noback M."/>
            <person name="Noone D."/>
            <person name="O'Reilly M."/>
            <person name="Ogawa K."/>
            <person name="Ogiwara A."/>
            <person name="Oudega B."/>
            <person name="Park S.-H."/>
            <person name="Parro V."/>
            <person name="Pohl T.M."/>
            <person name="Portetelle D."/>
            <person name="Porwollik S."/>
            <person name="Prescott A.M."/>
            <person name="Presecan E."/>
            <person name="Pujic P."/>
            <person name="Purnelle B."/>
            <person name="Rapoport G."/>
            <person name="Rey M."/>
            <person name="Reynolds S."/>
            <person name="Rieger M."/>
            <person name="Rivolta C."/>
            <person name="Rocha E."/>
            <person name="Roche B."/>
            <person name="Rose M."/>
            <person name="Sadaie Y."/>
            <person name="Sato T."/>
            <person name="Scanlan E."/>
            <person name="Schleich S."/>
            <person name="Schroeter R."/>
            <person name="Scoffone F."/>
            <person name="Sekiguchi J."/>
            <person name="Sekowska A."/>
            <person name="Seror S.J."/>
            <person name="Serror P."/>
            <person name="Shin B.-S."/>
            <person name="Soldo B."/>
            <person name="Sorokin A."/>
            <person name="Tacconi E."/>
            <person name="Takagi T."/>
            <person name="Takahashi H."/>
            <person name="Takemaru K."/>
            <person name="Takeuchi M."/>
            <person name="Tamakoshi A."/>
            <person name="Tanaka T."/>
            <person name="Terpstra P."/>
            <person name="Tognoni A."/>
            <person name="Tosato V."/>
            <person name="Uchiyama S."/>
            <person name="Vandenbol M."/>
            <person name="Vannier F."/>
            <person name="Vassarotti A."/>
            <person name="Viari A."/>
            <person name="Wambutt R."/>
            <person name="Wedler E."/>
            <person name="Wedler H."/>
            <person name="Weitzenegger T."/>
            <person name="Winters P."/>
            <person name="Wipat A."/>
            <person name="Yamamoto H."/>
            <person name="Yamane K."/>
            <person name="Yasumoto K."/>
            <person name="Yata K."/>
            <person name="Yoshida K."/>
            <person name="Yoshikawa H.-F."/>
            <person name="Zumstein E."/>
            <person name="Yoshikawa H."/>
            <person name="Danchin A."/>
        </authorList>
    </citation>
    <scope>NUCLEOTIDE SEQUENCE [LARGE SCALE GENOMIC DNA]</scope>
    <source>
        <strain>168</strain>
    </source>
</reference>
<reference key="4">
    <citation type="journal article" date="1995" name="Gene">
        <title>Analysis of a Bacillus subtilis genome fragment using a co-operative computer system prototype.</title>
        <authorList>
            <person name="Medigue C."/>
            <person name="Moszer I."/>
            <person name="Viari A."/>
            <person name="Danchin A."/>
        </authorList>
    </citation>
    <scope>IDENTIFICATION</scope>
</reference>
<reference key="5">
    <citation type="journal article" date="1998" name="J. Bacteriol.">
        <title>The ars operon in the skin element of Bacillus subtilis confers resistance to arsenate and arsenite.</title>
        <authorList>
            <person name="Sato T."/>
            <person name="Kobayashi Y."/>
        </authorList>
    </citation>
    <scope>CHARACTERIZATION</scope>
</reference>
<proteinExistence type="evidence at protein level"/>
<dbReference type="EMBL" id="D32216">
    <property type="protein sequence ID" value="BAA06967.1"/>
    <property type="molecule type" value="Genomic_DNA"/>
</dbReference>
<dbReference type="EMBL" id="D84432">
    <property type="protein sequence ID" value="BAA12431.1"/>
    <property type="molecule type" value="Genomic_DNA"/>
</dbReference>
<dbReference type="EMBL" id="AL009126">
    <property type="protein sequence ID" value="CAB14522.1"/>
    <property type="molecule type" value="Genomic_DNA"/>
</dbReference>
<dbReference type="PIR" id="H69949">
    <property type="entry name" value="H69949"/>
</dbReference>
<dbReference type="RefSeq" id="NP_390458.1">
    <property type="nucleotide sequence ID" value="NC_000964.3"/>
</dbReference>
<dbReference type="RefSeq" id="WP_004399122.1">
    <property type="nucleotide sequence ID" value="NZ_OZ025638.1"/>
</dbReference>
<dbReference type="SMR" id="P45949"/>
<dbReference type="FunCoup" id="P45949">
    <property type="interactions" value="69"/>
</dbReference>
<dbReference type="STRING" id="224308.BSU25810"/>
<dbReference type="PaxDb" id="224308-BSU25810"/>
<dbReference type="EnsemblBacteria" id="CAB14522">
    <property type="protein sequence ID" value="CAB14522"/>
    <property type="gene ID" value="BSU_25810"/>
</dbReference>
<dbReference type="GeneID" id="937789"/>
<dbReference type="KEGG" id="bsu:BSU25810"/>
<dbReference type="PATRIC" id="fig|224308.179.peg.2805"/>
<dbReference type="eggNOG" id="COG0640">
    <property type="taxonomic scope" value="Bacteria"/>
</dbReference>
<dbReference type="InParanoid" id="P45949"/>
<dbReference type="OrthoDB" id="9798835at2"/>
<dbReference type="PhylomeDB" id="P45949"/>
<dbReference type="BioCyc" id="BSUB:BSU25810-MONOMER"/>
<dbReference type="Proteomes" id="UP000001570">
    <property type="component" value="Chromosome"/>
</dbReference>
<dbReference type="GO" id="GO:0003677">
    <property type="term" value="F:DNA binding"/>
    <property type="evidence" value="ECO:0007669"/>
    <property type="project" value="UniProtKB-KW"/>
</dbReference>
<dbReference type="GO" id="GO:0003700">
    <property type="term" value="F:DNA-binding transcription factor activity"/>
    <property type="evidence" value="ECO:0007669"/>
    <property type="project" value="InterPro"/>
</dbReference>
<dbReference type="GO" id="GO:0006355">
    <property type="term" value="P:regulation of DNA-templated transcription"/>
    <property type="evidence" value="ECO:0000318"/>
    <property type="project" value="GO_Central"/>
</dbReference>
<dbReference type="GO" id="GO:0046685">
    <property type="term" value="P:response to arsenic-containing substance"/>
    <property type="evidence" value="ECO:0007669"/>
    <property type="project" value="UniProtKB-KW"/>
</dbReference>
<dbReference type="CDD" id="cd00090">
    <property type="entry name" value="HTH_ARSR"/>
    <property type="match status" value="1"/>
</dbReference>
<dbReference type="Gene3D" id="1.10.10.10">
    <property type="entry name" value="Winged helix-like DNA-binding domain superfamily/Winged helix DNA-binding domain"/>
    <property type="match status" value="1"/>
</dbReference>
<dbReference type="InterPro" id="IPR011991">
    <property type="entry name" value="ArsR-like_HTH"/>
</dbReference>
<dbReference type="InterPro" id="IPR018334">
    <property type="entry name" value="ArsR_HTH"/>
</dbReference>
<dbReference type="InterPro" id="IPR001845">
    <property type="entry name" value="HTH_ArsR_DNA-bd_dom"/>
</dbReference>
<dbReference type="InterPro" id="IPR051081">
    <property type="entry name" value="HTH_MetalResp_TranReg"/>
</dbReference>
<dbReference type="InterPro" id="IPR036388">
    <property type="entry name" value="WH-like_DNA-bd_sf"/>
</dbReference>
<dbReference type="InterPro" id="IPR036390">
    <property type="entry name" value="WH_DNA-bd_sf"/>
</dbReference>
<dbReference type="NCBIfam" id="NF033788">
    <property type="entry name" value="HTH_metalloreg"/>
    <property type="match status" value="1"/>
</dbReference>
<dbReference type="PANTHER" id="PTHR33154:SF18">
    <property type="entry name" value="ARSENICAL RESISTANCE OPERON REPRESSOR"/>
    <property type="match status" value="1"/>
</dbReference>
<dbReference type="PANTHER" id="PTHR33154">
    <property type="entry name" value="TRANSCRIPTIONAL REGULATOR, ARSR FAMILY"/>
    <property type="match status" value="1"/>
</dbReference>
<dbReference type="Pfam" id="PF01022">
    <property type="entry name" value="HTH_5"/>
    <property type="match status" value="1"/>
</dbReference>
<dbReference type="PRINTS" id="PR00778">
    <property type="entry name" value="HTHARSR"/>
</dbReference>
<dbReference type="SMART" id="SM00418">
    <property type="entry name" value="HTH_ARSR"/>
    <property type="match status" value="1"/>
</dbReference>
<dbReference type="SUPFAM" id="SSF46785">
    <property type="entry name" value="Winged helix' DNA-binding domain"/>
    <property type="match status" value="1"/>
</dbReference>
<dbReference type="PROSITE" id="PS00846">
    <property type="entry name" value="HTH_ARSR_1"/>
    <property type="match status" value="1"/>
</dbReference>
<dbReference type="PROSITE" id="PS50987">
    <property type="entry name" value="HTH_ARSR_2"/>
    <property type="match status" value="1"/>
</dbReference>
<organism>
    <name type="scientific">Bacillus subtilis (strain 168)</name>
    <dbReference type="NCBI Taxonomy" id="224308"/>
    <lineage>
        <taxon>Bacteria</taxon>
        <taxon>Bacillati</taxon>
        <taxon>Bacillota</taxon>
        <taxon>Bacilli</taxon>
        <taxon>Bacillales</taxon>
        <taxon>Bacillaceae</taxon>
        <taxon>Bacillus</taxon>
    </lineage>
</organism>
<comment type="function">
    <text>Transcriptional repressor for the ars operon.</text>
</comment>
<keyword id="KW-0059">Arsenical resistance</keyword>
<keyword id="KW-0238">DNA-binding</keyword>
<keyword id="KW-1185">Reference proteome</keyword>
<keyword id="KW-0678">Repressor</keyword>
<keyword id="KW-0804">Transcription</keyword>
<keyword id="KW-0805">Transcription regulation</keyword>
<sequence length="105" mass="12287">MDETKSELLRKYEQKFKALADQKRLEIMYELCQRGKTCVCDLTEIFEVTQSKLSYHLKILLDANLITKETKGTWSYYDLNDEEVNGLLSEELCCIFRKKGEGDCC</sequence>